<feature type="chain" id="PRO_1000196586" description="5'-nucleotidase SurE">
    <location>
        <begin position="1"/>
        <end position="263"/>
    </location>
</feature>
<feature type="binding site" evidence="1">
    <location>
        <position position="8"/>
    </location>
    <ligand>
        <name>a divalent metal cation</name>
        <dbReference type="ChEBI" id="CHEBI:60240"/>
    </ligand>
</feature>
<feature type="binding site" evidence="1">
    <location>
        <position position="9"/>
    </location>
    <ligand>
        <name>a divalent metal cation</name>
        <dbReference type="ChEBI" id="CHEBI:60240"/>
    </ligand>
</feature>
<feature type="binding site" evidence="1">
    <location>
        <position position="40"/>
    </location>
    <ligand>
        <name>a divalent metal cation</name>
        <dbReference type="ChEBI" id="CHEBI:60240"/>
    </ligand>
</feature>
<feature type="binding site" evidence="1">
    <location>
        <position position="93"/>
    </location>
    <ligand>
        <name>a divalent metal cation</name>
        <dbReference type="ChEBI" id="CHEBI:60240"/>
    </ligand>
</feature>
<name>SURE_CAUVN</name>
<evidence type="ECO:0000255" key="1">
    <source>
        <dbReference type="HAMAP-Rule" id="MF_00060"/>
    </source>
</evidence>
<protein>
    <recommendedName>
        <fullName evidence="1">5'-nucleotidase SurE</fullName>
        <ecNumber evidence="1">3.1.3.5</ecNumber>
    </recommendedName>
    <alternativeName>
        <fullName evidence="1">Nucleoside 5'-monophosphate phosphohydrolase</fullName>
    </alternativeName>
</protein>
<comment type="function">
    <text evidence="1">Nucleotidase that shows phosphatase activity on nucleoside 5'-monophosphates.</text>
</comment>
<comment type="catalytic activity">
    <reaction evidence="1">
        <text>a ribonucleoside 5'-phosphate + H2O = a ribonucleoside + phosphate</text>
        <dbReference type="Rhea" id="RHEA:12484"/>
        <dbReference type="ChEBI" id="CHEBI:15377"/>
        <dbReference type="ChEBI" id="CHEBI:18254"/>
        <dbReference type="ChEBI" id="CHEBI:43474"/>
        <dbReference type="ChEBI" id="CHEBI:58043"/>
        <dbReference type="EC" id="3.1.3.5"/>
    </reaction>
</comment>
<comment type="cofactor">
    <cofactor evidence="1">
        <name>a divalent metal cation</name>
        <dbReference type="ChEBI" id="CHEBI:60240"/>
    </cofactor>
    <text evidence="1">Binds 1 divalent metal cation per subunit.</text>
</comment>
<comment type="subcellular location">
    <subcellularLocation>
        <location evidence="1">Cytoplasm</location>
    </subcellularLocation>
</comment>
<comment type="similarity">
    <text evidence="1">Belongs to the SurE nucleotidase family.</text>
</comment>
<dbReference type="EC" id="3.1.3.5" evidence="1"/>
<dbReference type="EMBL" id="CP001340">
    <property type="protein sequence ID" value="ACL95542.1"/>
    <property type="molecule type" value="Genomic_DNA"/>
</dbReference>
<dbReference type="RefSeq" id="WP_010919864.1">
    <property type="nucleotide sequence ID" value="NC_011916.1"/>
</dbReference>
<dbReference type="RefSeq" id="YP_002517450.1">
    <property type="nucleotide sequence ID" value="NC_011916.1"/>
</dbReference>
<dbReference type="SMR" id="B8GX52"/>
<dbReference type="GeneID" id="7330383"/>
<dbReference type="KEGG" id="ccs:CCNA_02077"/>
<dbReference type="PATRIC" id="fig|565050.3.peg.2035"/>
<dbReference type="HOGENOM" id="CLU_045192_1_2_5"/>
<dbReference type="OrthoDB" id="9780815at2"/>
<dbReference type="PhylomeDB" id="B8GX52"/>
<dbReference type="Proteomes" id="UP000001364">
    <property type="component" value="Chromosome"/>
</dbReference>
<dbReference type="GO" id="GO:0005737">
    <property type="term" value="C:cytoplasm"/>
    <property type="evidence" value="ECO:0007669"/>
    <property type="project" value="UniProtKB-SubCell"/>
</dbReference>
<dbReference type="GO" id="GO:0008254">
    <property type="term" value="F:3'-nucleotidase activity"/>
    <property type="evidence" value="ECO:0007669"/>
    <property type="project" value="TreeGrafter"/>
</dbReference>
<dbReference type="GO" id="GO:0008253">
    <property type="term" value="F:5'-nucleotidase activity"/>
    <property type="evidence" value="ECO:0007669"/>
    <property type="project" value="UniProtKB-UniRule"/>
</dbReference>
<dbReference type="GO" id="GO:0004309">
    <property type="term" value="F:exopolyphosphatase activity"/>
    <property type="evidence" value="ECO:0007669"/>
    <property type="project" value="TreeGrafter"/>
</dbReference>
<dbReference type="GO" id="GO:0046872">
    <property type="term" value="F:metal ion binding"/>
    <property type="evidence" value="ECO:0007669"/>
    <property type="project" value="UniProtKB-UniRule"/>
</dbReference>
<dbReference type="GO" id="GO:0000166">
    <property type="term" value="F:nucleotide binding"/>
    <property type="evidence" value="ECO:0007669"/>
    <property type="project" value="UniProtKB-KW"/>
</dbReference>
<dbReference type="FunFam" id="3.40.1210.10:FF:000001">
    <property type="entry name" value="5'/3'-nucleotidase SurE"/>
    <property type="match status" value="1"/>
</dbReference>
<dbReference type="Gene3D" id="3.40.1210.10">
    <property type="entry name" value="Survival protein SurE-like phosphatase/nucleotidase"/>
    <property type="match status" value="1"/>
</dbReference>
<dbReference type="HAMAP" id="MF_00060">
    <property type="entry name" value="SurE"/>
    <property type="match status" value="1"/>
</dbReference>
<dbReference type="InterPro" id="IPR030048">
    <property type="entry name" value="SurE"/>
</dbReference>
<dbReference type="InterPro" id="IPR002828">
    <property type="entry name" value="SurE-like_Pase/nucleotidase"/>
</dbReference>
<dbReference type="InterPro" id="IPR036523">
    <property type="entry name" value="SurE-like_sf"/>
</dbReference>
<dbReference type="NCBIfam" id="NF001490">
    <property type="entry name" value="PRK00346.1-4"/>
    <property type="match status" value="1"/>
</dbReference>
<dbReference type="NCBIfam" id="TIGR00087">
    <property type="entry name" value="surE"/>
    <property type="match status" value="1"/>
</dbReference>
<dbReference type="PANTHER" id="PTHR30457">
    <property type="entry name" value="5'-NUCLEOTIDASE SURE"/>
    <property type="match status" value="1"/>
</dbReference>
<dbReference type="PANTHER" id="PTHR30457:SF12">
    <property type="entry name" value="5'_3'-NUCLEOTIDASE SURE"/>
    <property type="match status" value="1"/>
</dbReference>
<dbReference type="Pfam" id="PF01975">
    <property type="entry name" value="SurE"/>
    <property type="match status" value="1"/>
</dbReference>
<dbReference type="SUPFAM" id="SSF64167">
    <property type="entry name" value="SurE-like"/>
    <property type="match status" value="1"/>
</dbReference>
<keyword id="KW-0963">Cytoplasm</keyword>
<keyword id="KW-0378">Hydrolase</keyword>
<keyword id="KW-0479">Metal-binding</keyword>
<keyword id="KW-0547">Nucleotide-binding</keyword>
<keyword id="KW-1185">Reference proteome</keyword>
<gene>
    <name evidence="1" type="primary">surE</name>
    <name type="ordered locus">CCNA_02077</name>
</gene>
<reference key="1">
    <citation type="journal article" date="2010" name="J. Bacteriol.">
        <title>The genetic basis of laboratory adaptation in Caulobacter crescentus.</title>
        <authorList>
            <person name="Marks M.E."/>
            <person name="Castro-Rojas C.M."/>
            <person name="Teiling C."/>
            <person name="Du L."/>
            <person name="Kapatral V."/>
            <person name="Walunas T.L."/>
            <person name="Crosson S."/>
        </authorList>
    </citation>
    <scope>NUCLEOTIDE SEQUENCE [LARGE SCALE GENOMIC DNA]</scope>
    <source>
        <strain>NA1000 / CB15N</strain>
    </source>
</reference>
<sequence length="263" mass="28671">MRILLTNDDGIHAPGLQALEKIARALSDDVWICAPEYEQSGASRALTLADPIRVRKLDSRRFAVEGTPTDCVMMAVQHLIEGGRPDLVLSGVNRGQNIAEDVTLSGTVAGAIEGMAMGIPSIALSQSMNYFHDEIVAHWETAEAFAPGIIQRLLEVGWPADVVMNVNFPALPPESVKAVEVTRQGFRDGHMRHMDKRTDLRGRDYYWMGFTAKASQPAEGTDLRAVYEGRISVTPLHIDLTHNETVHTLKGVLGGAPPRKVGA</sequence>
<organism>
    <name type="scientific">Caulobacter vibrioides (strain NA1000 / CB15N)</name>
    <name type="common">Caulobacter crescentus</name>
    <dbReference type="NCBI Taxonomy" id="565050"/>
    <lineage>
        <taxon>Bacteria</taxon>
        <taxon>Pseudomonadati</taxon>
        <taxon>Pseudomonadota</taxon>
        <taxon>Alphaproteobacteria</taxon>
        <taxon>Caulobacterales</taxon>
        <taxon>Caulobacteraceae</taxon>
        <taxon>Caulobacter</taxon>
    </lineage>
</organism>
<proteinExistence type="inferred from homology"/>
<accession>B8GX52</accession>